<protein>
    <recommendedName>
        <fullName>Zinc finger and SCAN domain-containing protein 29</fullName>
    </recommendedName>
    <alternativeName>
        <fullName>Zinc finger protein 690</fullName>
    </alternativeName>
</protein>
<organism>
    <name type="scientific">Homo sapiens</name>
    <name type="common">Human</name>
    <dbReference type="NCBI Taxonomy" id="9606"/>
    <lineage>
        <taxon>Eukaryota</taxon>
        <taxon>Metazoa</taxon>
        <taxon>Chordata</taxon>
        <taxon>Craniata</taxon>
        <taxon>Vertebrata</taxon>
        <taxon>Euteleostomi</taxon>
        <taxon>Mammalia</taxon>
        <taxon>Eutheria</taxon>
        <taxon>Euarchontoglires</taxon>
        <taxon>Primates</taxon>
        <taxon>Haplorrhini</taxon>
        <taxon>Catarrhini</taxon>
        <taxon>Hominidae</taxon>
        <taxon>Homo</taxon>
    </lineage>
</organism>
<sequence>MMAKSALRENGTNSETFRQRFRRFHYQEVAGPREAFSQLWELCCRWLRPEVRTKEQIVELLVLEQFLTVLPGEIQNWVQEQCPENGEEAVTLVEDLEREPGRPRSSVTVSVKGQEVRLEKMTPPKSSQELLSVRQESVEPQPRGVPKKERARSPDLGPQEQMNPKEKLKPFQRSGLPFPKSGVVSRLEQGEPWIPDLLGSKEKELPSGSHIGDRRVHADLLPSKKDRRSWVEQDHWSFEDEKVAGVHWGYEETRTLLAILSQTEFYEALRNCHRNSQVYGAVAERLREYGFLRTLEQCRTKFKGLQKSYRKVKSGHPPETCPFFEEMEALMSAQVIALPSNGLEAAASHSGLVGSDAETEEPGQRGWQHEEGAEEAVAQESDSDDMDLEATPQDPNSAAPVVFRSPGGVHWGYEETKTYLAILSETQFYEALRNCHRNSQLYGAVAERLWEYGFLRTPEQCRTKFKSLQTSYRKVKNGQAPETCPFFEEMDALVSVRVAAPPNDGQEETASCPVQGTSEAEAQKQAEEADEATEEDSDDDEEDTEIPPGAVITRAPVLFQSPRGFEAGFENEDNSKRDISEEVQLHRTLLARSERKIPRYLHQGKGNESDCRSGRQWAKTSGEKRGKLTLPEKSLSEVLSQQRPCLGERPYKYLKYSKSFGPNSLLMHQVSHQVENPYKCADCGKSFSRSARLIRHRRIHTGEKPYKCLDCGKSFRDSSNFITHRRIHTGEKPYQCGECGKCFNQSSSLIIHQRTHTGEKPYQCEECGKSFNNSSHFSAHRRIHTGERPHVCPDCGKSFSKSSDLRAHHRTHTGEKPYGCHDCGKCFSKSSALNKHGEIHAREKLLTQSAPK</sequence>
<feature type="chain" id="PRO_0000234011" description="Zinc finger and SCAN domain-containing protein 29">
    <location>
        <begin position="1"/>
        <end position="852"/>
    </location>
</feature>
<feature type="domain" description="SCAN box" evidence="2">
    <location>
        <begin position="18"/>
        <end position="100"/>
    </location>
</feature>
<feature type="zinc finger region" description="C2H2-type 1" evidence="1">
    <location>
        <begin position="678"/>
        <end position="700"/>
    </location>
</feature>
<feature type="zinc finger region" description="C2H2-type 2" evidence="1">
    <location>
        <begin position="706"/>
        <end position="728"/>
    </location>
</feature>
<feature type="zinc finger region" description="C2H2-type 3" evidence="1">
    <location>
        <begin position="734"/>
        <end position="756"/>
    </location>
</feature>
<feature type="zinc finger region" description="C2H2-type 4" evidence="1">
    <location>
        <begin position="762"/>
        <end position="784"/>
    </location>
</feature>
<feature type="zinc finger region" description="C2H2-type 5" evidence="1">
    <location>
        <begin position="790"/>
        <end position="812"/>
    </location>
</feature>
<feature type="zinc finger region" description="C2H2-type 6" evidence="1">
    <location>
        <begin position="818"/>
        <end position="840"/>
    </location>
</feature>
<feature type="region of interest" description="Disordered" evidence="3">
    <location>
        <begin position="96"/>
        <end position="182"/>
    </location>
</feature>
<feature type="region of interest" description="Disordered" evidence="3">
    <location>
        <begin position="347"/>
        <end position="400"/>
    </location>
</feature>
<feature type="region of interest" description="Disordered" evidence="3">
    <location>
        <begin position="502"/>
        <end position="557"/>
    </location>
</feature>
<feature type="region of interest" description="Disordered" evidence="3">
    <location>
        <begin position="603"/>
        <end position="625"/>
    </location>
</feature>
<feature type="compositionally biased region" description="Polar residues" evidence="3">
    <location>
        <begin position="508"/>
        <end position="517"/>
    </location>
</feature>
<feature type="compositionally biased region" description="Acidic residues" evidence="3">
    <location>
        <begin position="528"/>
        <end position="545"/>
    </location>
</feature>
<feature type="modified residue" description="Phosphoserine" evidence="8 9">
    <location>
        <position position="153"/>
    </location>
</feature>
<feature type="modified residue" description="Phosphoserine" evidence="8">
    <location>
        <position position="561"/>
    </location>
</feature>
<feature type="cross-link" description="Glycyl lysine isopeptide (Lys-Gly) (interchain with G-Cter in SUMO2)" evidence="10">
    <location>
        <position position="112"/>
    </location>
</feature>
<feature type="cross-link" description="Glycyl lysine isopeptide (Lys-Gly) (interchain with G-Cter in SUMO2)" evidence="10">
    <location>
        <position position="180"/>
    </location>
</feature>
<feature type="cross-link" description="Glycyl lysine isopeptide (Lys-Gly) (interchain with G-Cter in SUMO2)" evidence="10">
    <location>
        <position position="576"/>
    </location>
</feature>
<feature type="cross-link" description="Glycyl lysine isopeptide (Lys-Gly) (interchain with G-Cter in SUMO2)" evidence="10">
    <location>
        <position position="652"/>
    </location>
</feature>
<feature type="splice variant" id="VSP_018179" description="In isoform 2." evidence="5">
    <location>
        <begin position="1"/>
        <end position="120"/>
    </location>
</feature>
<feature type="splice variant" id="VSP_018180" description="In isoform 4." evidence="6">
    <location>
        <begin position="176"/>
        <end position="564"/>
    </location>
</feature>
<feature type="splice variant" id="VSP_018181" description="In isoform 3." evidence="6">
    <original>SVRVAAPPNDGQEETASCPVQGTSEAEAQKQAEEADEATEEDSDDDEEDTEIPPGAVITRAPV</original>
    <variation>LKLDLRMKIIQNGIFLRKYNCIGHYLQDLKGKFPGIFIRVKAMRVTVDQEDSGQRPQGRKEEN</variation>
    <location>
        <begin position="495"/>
        <end position="557"/>
    </location>
</feature>
<feature type="splice variant" id="VSP_018182" description="In isoform 3." evidence="6">
    <location>
        <begin position="558"/>
        <end position="852"/>
    </location>
</feature>
<feature type="sequence variant" id="VAR_059949" description="In dbSNP:rs3809482." evidence="4">
    <original>R</original>
    <variation>G</variation>
    <location>
        <position position="104"/>
    </location>
</feature>
<feature type="sequence variant" id="VAR_057459" description="In dbSNP:rs3917221." evidence="4">
    <original>G</original>
    <variation>S</variation>
    <location>
        <position position="199"/>
    </location>
</feature>
<feature type="sequence conflict" description="In Ref. 3; AAI09271." evidence="7" ref="3">
    <original>G</original>
    <variation>S</variation>
    <location>
        <position position="182"/>
    </location>
</feature>
<comment type="function">
    <text>May be involved in transcriptional regulation.</text>
</comment>
<comment type="interaction">
    <interactant intactId="EBI-14188237">
        <id>Q8IWY8-3</id>
    </interactant>
    <interactant intactId="EBI-10297029">
        <id>Q9BRL7</id>
        <label>SEC22C</label>
    </interactant>
    <organismsDiffer>false</organismsDiffer>
    <experiments>3</experiments>
</comment>
<comment type="interaction">
    <interactant intactId="EBI-14188237">
        <id>Q8IWY8-3</id>
    </interactant>
    <interactant intactId="EBI-740232">
        <id>Q9NWS9-2</id>
        <label>ZNF446</label>
    </interactant>
    <organismsDiffer>false</organismsDiffer>
    <experiments>3</experiments>
</comment>
<comment type="subcellular location">
    <subcellularLocation>
        <location evidence="7">Nucleus</location>
    </subcellularLocation>
</comment>
<comment type="alternative products">
    <event type="alternative splicing"/>
    <isoform>
        <id>Q8IWY8-1</id>
        <name>1</name>
        <sequence type="displayed"/>
    </isoform>
    <isoform>
        <id>Q8IWY8-2</id>
        <name>2</name>
        <sequence type="described" ref="VSP_018179"/>
    </isoform>
    <isoform>
        <id>Q8IWY8-3</id>
        <name>3</name>
        <sequence type="described" ref="VSP_018181 VSP_018182"/>
    </isoform>
    <isoform>
        <id>Q8IWY8-4</id>
        <name>4</name>
        <sequence type="described" ref="VSP_018180"/>
    </isoform>
</comment>
<comment type="similarity">
    <text evidence="7">Belongs to the krueppel C2H2-type zinc-finger protein family.</text>
</comment>
<dbReference type="EMBL" id="AK093186">
    <property type="protein sequence ID" value="BAC04088.1"/>
    <property type="molecule type" value="mRNA"/>
</dbReference>
<dbReference type="EMBL" id="AK122788">
    <property type="protein sequence ID" value="BAG53731.1"/>
    <property type="molecule type" value="mRNA"/>
</dbReference>
<dbReference type="EMBL" id="AF525399">
    <property type="protein sequence ID" value="AAO14995.1"/>
    <property type="molecule type" value="mRNA"/>
</dbReference>
<dbReference type="EMBL" id="BC109270">
    <property type="protein sequence ID" value="AAI09271.1"/>
    <property type="molecule type" value="mRNA"/>
</dbReference>
<dbReference type="EMBL" id="BC109271">
    <property type="protein sequence ID" value="AAI09272.1"/>
    <property type="molecule type" value="mRNA"/>
</dbReference>
<dbReference type="CCDS" id="CCDS10095.2">
    <molecule id="Q8IWY8-1"/>
</dbReference>
<dbReference type="RefSeq" id="NP_001359009.1">
    <molecule id="Q8IWY8-1"/>
    <property type="nucleotide sequence ID" value="NM_001372080.1"/>
</dbReference>
<dbReference type="RefSeq" id="NP_689668.3">
    <molecule id="Q8IWY8-1"/>
    <property type="nucleotide sequence ID" value="NM_152455.3"/>
</dbReference>
<dbReference type="RefSeq" id="XP_006720464.1">
    <property type="nucleotide sequence ID" value="XM_006720401.3"/>
</dbReference>
<dbReference type="RefSeq" id="XP_011519568.1">
    <property type="nucleotide sequence ID" value="XM_011521266.2"/>
</dbReference>
<dbReference type="RefSeq" id="XP_047288143.1">
    <molecule id="Q8IWY8-1"/>
    <property type="nucleotide sequence ID" value="XM_047432187.1"/>
</dbReference>
<dbReference type="RefSeq" id="XP_054233327.1">
    <molecule id="Q8IWY8-1"/>
    <property type="nucleotide sequence ID" value="XM_054377352.1"/>
</dbReference>
<dbReference type="SMR" id="Q8IWY8"/>
<dbReference type="BioGRID" id="126960">
    <property type="interactions" value="29"/>
</dbReference>
<dbReference type="FunCoup" id="Q8IWY8">
    <property type="interactions" value="508"/>
</dbReference>
<dbReference type="IntAct" id="Q8IWY8">
    <property type="interactions" value="19"/>
</dbReference>
<dbReference type="STRING" id="9606.ENSP00000380174"/>
<dbReference type="iPTMnet" id="Q8IWY8"/>
<dbReference type="PhosphoSitePlus" id="Q8IWY8"/>
<dbReference type="BioMuta" id="ZSCAN29"/>
<dbReference type="DMDM" id="259016454"/>
<dbReference type="jPOST" id="Q8IWY8"/>
<dbReference type="MassIVE" id="Q8IWY8"/>
<dbReference type="PaxDb" id="9606-ENSP00000380174"/>
<dbReference type="PeptideAtlas" id="Q8IWY8"/>
<dbReference type="ProteomicsDB" id="70928">
    <molecule id="Q8IWY8-1"/>
</dbReference>
<dbReference type="ProteomicsDB" id="70929">
    <molecule id="Q8IWY8-2"/>
</dbReference>
<dbReference type="ProteomicsDB" id="70930">
    <molecule id="Q8IWY8-3"/>
</dbReference>
<dbReference type="ProteomicsDB" id="70931">
    <molecule id="Q8IWY8-4"/>
</dbReference>
<dbReference type="Pumba" id="Q8IWY8"/>
<dbReference type="ABCD" id="Q8IWY8">
    <property type="antibodies" value="10 sequenced antibodies"/>
</dbReference>
<dbReference type="Antibodypedia" id="11192">
    <property type="antibodies" value="117 antibodies from 23 providers"/>
</dbReference>
<dbReference type="DNASU" id="146050"/>
<dbReference type="Ensembl" id="ENST00000396976.6">
    <molecule id="Q8IWY8-1"/>
    <property type="protein sequence ID" value="ENSP00000380174.2"/>
    <property type="gene ID" value="ENSG00000140265.14"/>
</dbReference>
<dbReference type="Ensembl" id="ENST00000684362.1">
    <molecule id="Q8IWY8-1"/>
    <property type="protein sequence ID" value="ENSP00000507363.1"/>
    <property type="gene ID" value="ENSG00000140265.14"/>
</dbReference>
<dbReference type="GeneID" id="146050"/>
<dbReference type="KEGG" id="hsa:146050"/>
<dbReference type="MANE-Select" id="ENST00000684362.1">
    <property type="protein sequence ID" value="ENSP00000507363.1"/>
    <property type="RefSeq nucleotide sequence ID" value="NM_001372080.1"/>
    <property type="RefSeq protein sequence ID" value="NP_001359009.1"/>
</dbReference>
<dbReference type="UCSC" id="uc001zrk.2">
    <molecule id="Q8IWY8-1"/>
    <property type="organism name" value="human"/>
</dbReference>
<dbReference type="AGR" id="HGNC:26673"/>
<dbReference type="CTD" id="146050"/>
<dbReference type="DisGeNET" id="146050"/>
<dbReference type="GeneCards" id="ZSCAN29"/>
<dbReference type="HGNC" id="HGNC:26673">
    <property type="gene designation" value="ZSCAN29"/>
</dbReference>
<dbReference type="HPA" id="ENSG00000140265">
    <property type="expression patterns" value="Low tissue specificity"/>
</dbReference>
<dbReference type="MalaCards" id="ZSCAN29"/>
<dbReference type="MIM" id="620932">
    <property type="type" value="gene"/>
</dbReference>
<dbReference type="neXtProt" id="NX_Q8IWY8"/>
<dbReference type="OpenTargets" id="ENSG00000140265"/>
<dbReference type="PharmGKB" id="PA162411015"/>
<dbReference type="VEuPathDB" id="HostDB:ENSG00000140265"/>
<dbReference type="eggNOG" id="KOG1721">
    <property type="taxonomic scope" value="Eukaryota"/>
</dbReference>
<dbReference type="GeneTree" id="ENSGT00940000161523"/>
<dbReference type="HOGENOM" id="CLU_002678_88_0_1"/>
<dbReference type="InParanoid" id="Q8IWY8"/>
<dbReference type="OMA" id="QGGWQQE"/>
<dbReference type="OrthoDB" id="6077919at2759"/>
<dbReference type="PAN-GO" id="Q8IWY8">
    <property type="GO annotations" value="3 GO annotations based on evolutionary models"/>
</dbReference>
<dbReference type="PhylomeDB" id="Q8IWY8"/>
<dbReference type="TreeFam" id="TF336839"/>
<dbReference type="PathwayCommons" id="Q8IWY8"/>
<dbReference type="SignaLink" id="Q8IWY8"/>
<dbReference type="BioGRID-ORCS" id="146050">
    <property type="hits" value="14 hits in 1177 CRISPR screens"/>
</dbReference>
<dbReference type="ChiTaRS" id="ZSCAN29">
    <property type="organism name" value="human"/>
</dbReference>
<dbReference type="GenomeRNAi" id="146050"/>
<dbReference type="Pharos" id="Q8IWY8">
    <property type="development level" value="Tdark"/>
</dbReference>
<dbReference type="PRO" id="PR:Q8IWY8"/>
<dbReference type="Proteomes" id="UP000005640">
    <property type="component" value="Chromosome 15"/>
</dbReference>
<dbReference type="RNAct" id="Q8IWY8">
    <property type="molecule type" value="protein"/>
</dbReference>
<dbReference type="Bgee" id="ENSG00000140265">
    <property type="expression patterns" value="Expressed in secondary oocyte and 198 other cell types or tissues"/>
</dbReference>
<dbReference type="ExpressionAtlas" id="Q8IWY8">
    <property type="expression patterns" value="baseline and differential"/>
</dbReference>
<dbReference type="GO" id="GO:0005634">
    <property type="term" value="C:nucleus"/>
    <property type="evidence" value="ECO:0007669"/>
    <property type="project" value="UniProtKB-SubCell"/>
</dbReference>
<dbReference type="GO" id="GO:0000981">
    <property type="term" value="F:DNA-binding transcription factor activity, RNA polymerase II-specific"/>
    <property type="evidence" value="ECO:0000318"/>
    <property type="project" value="GO_Central"/>
</dbReference>
<dbReference type="GO" id="GO:0000978">
    <property type="term" value="F:RNA polymerase II cis-regulatory region sequence-specific DNA binding"/>
    <property type="evidence" value="ECO:0000318"/>
    <property type="project" value="GO_Central"/>
</dbReference>
<dbReference type="GO" id="GO:1990837">
    <property type="term" value="F:sequence-specific double-stranded DNA binding"/>
    <property type="evidence" value="ECO:0000314"/>
    <property type="project" value="ARUK-UCL"/>
</dbReference>
<dbReference type="GO" id="GO:0008270">
    <property type="term" value="F:zinc ion binding"/>
    <property type="evidence" value="ECO:0007669"/>
    <property type="project" value="UniProtKB-KW"/>
</dbReference>
<dbReference type="GO" id="GO:0006357">
    <property type="term" value="P:regulation of transcription by RNA polymerase II"/>
    <property type="evidence" value="ECO:0000318"/>
    <property type="project" value="GO_Central"/>
</dbReference>
<dbReference type="CDD" id="cd07936">
    <property type="entry name" value="SCAN"/>
    <property type="match status" value="1"/>
</dbReference>
<dbReference type="FunFam" id="1.10.10.60:FF:000032">
    <property type="entry name" value="Zinc finger and SCAN domain-containing 20"/>
    <property type="match status" value="2"/>
</dbReference>
<dbReference type="FunFam" id="3.30.160.60:FF:003000">
    <property type="entry name" value="Zinc finger and SCAN domain-containing 20"/>
    <property type="match status" value="1"/>
</dbReference>
<dbReference type="FunFam" id="3.30.160.60:FF:000355">
    <property type="entry name" value="zinc finger and SCAN domain-containing protein 20 isoform X1"/>
    <property type="match status" value="1"/>
</dbReference>
<dbReference type="FunFam" id="3.30.160.60:FF:002548">
    <property type="entry name" value="Zinc finger and SCAN domain-containing protein 29"/>
    <property type="match status" value="1"/>
</dbReference>
<dbReference type="FunFam" id="3.30.160.60:FF:000557">
    <property type="entry name" value="zinc finger and SCAN domain-containing protein 29"/>
    <property type="match status" value="1"/>
</dbReference>
<dbReference type="FunFam" id="3.30.160.60:FF:000258">
    <property type="entry name" value="zinc finger and SCAN domain-containing protein 29 isoform X2"/>
    <property type="match status" value="1"/>
</dbReference>
<dbReference type="FunFam" id="1.10.4020.10:FF:000001">
    <property type="entry name" value="zinc finger protein 263 isoform X1"/>
    <property type="match status" value="1"/>
</dbReference>
<dbReference type="FunFam" id="3.30.160.60:FF:000642">
    <property type="entry name" value="Zinc finger with KRAB and SCAN domains 2"/>
    <property type="match status" value="1"/>
</dbReference>
<dbReference type="Gene3D" id="3.30.160.60">
    <property type="entry name" value="Classic Zinc Finger"/>
    <property type="match status" value="6"/>
</dbReference>
<dbReference type="Gene3D" id="1.10.4020.10">
    <property type="entry name" value="DNA breaking-rejoining enzymes"/>
    <property type="match status" value="1"/>
</dbReference>
<dbReference type="Gene3D" id="1.10.10.60">
    <property type="entry name" value="Homeodomain-like"/>
    <property type="match status" value="2"/>
</dbReference>
<dbReference type="InterPro" id="IPR044822">
    <property type="entry name" value="Myb_DNA-bind_4"/>
</dbReference>
<dbReference type="InterPro" id="IPR003309">
    <property type="entry name" value="SCAN_dom"/>
</dbReference>
<dbReference type="InterPro" id="IPR038269">
    <property type="entry name" value="SCAN_sf"/>
</dbReference>
<dbReference type="InterPro" id="IPR036236">
    <property type="entry name" value="Znf_C2H2_sf"/>
</dbReference>
<dbReference type="InterPro" id="IPR013087">
    <property type="entry name" value="Znf_C2H2_type"/>
</dbReference>
<dbReference type="PANTHER" id="PTHR23235:SF178">
    <property type="entry name" value="C2H2-TYPE DOMAIN-CONTAINING PROTEIN-RELATED"/>
    <property type="match status" value="1"/>
</dbReference>
<dbReference type="PANTHER" id="PTHR23235">
    <property type="entry name" value="KRUEPPEL-LIKE TRANSCRIPTION FACTOR"/>
    <property type="match status" value="1"/>
</dbReference>
<dbReference type="Pfam" id="PF13837">
    <property type="entry name" value="Myb_DNA-bind_4"/>
    <property type="match status" value="2"/>
</dbReference>
<dbReference type="Pfam" id="PF02023">
    <property type="entry name" value="SCAN"/>
    <property type="match status" value="1"/>
</dbReference>
<dbReference type="Pfam" id="PF00096">
    <property type="entry name" value="zf-C2H2"/>
    <property type="match status" value="6"/>
</dbReference>
<dbReference type="SMART" id="SM00431">
    <property type="entry name" value="SCAN"/>
    <property type="match status" value="1"/>
</dbReference>
<dbReference type="SMART" id="SM00355">
    <property type="entry name" value="ZnF_C2H2"/>
    <property type="match status" value="6"/>
</dbReference>
<dbReference type="SUPFAM" id="SSF57667">
    <property type="entry name" value="beta-beta-alpha zinc fingers"/>
    <property type="match status" value="4"/>
</dbReference>
<dbReference type="SUPFAM" id="SSF47353">
    <property type="entry name" value="Retrovirus capsid dimerization domain-like"/>
    <property type="match status" value="1"/>
</dbReference>
<dbReference type="PROSITE" id="PS50804">
    <property type="entry name" value="SCAN_BOX"/>
    <property type="match status" value="1"/>
</dbReference>
<dbReference type="PROSITE" id="PS00028">
    <property type="entry name" value="ZINC_FINGER_C2H2_1"/>
    <property type="match status" value="6"/>
</dbReference>
<dbReference type="PROSITE" id="PS50157">
    <property type="entry name" value="ZINC_FINGER_C2H2_2"/>
    <property type="match status" value="6"/>
</dbReference>
<keyword id="KW-0025">Alternative splicing</keyword>
<keyword id="KW-0238">DNA-binding</keyword>
<keyword id="KW-1017">Isopeptide bond</keyword>
<keyword id="KW-0479">Metal-binding</keyword>
<keyword id="KW-0539">Nucleus</keyword>
<keyword id="KW-0597">Phosphoprotein</keyword>
<keyword id="KW-1267">Proteomics identification</keyword>
<keyword id="KW-1185">Reference proteome</keyword>
<keyword id="KW-0677">Repeat</keyword>
<keyword id="KW-0804">Transcription</keyword>
<keyword id="KW-0805">Transcription regulation</keyword>
<keyword id="KW-0832">Ubl conjugation</keyword>
<keyword id="KW-0862">Zinc</keyword>
<keyword id="KW-0863">Zinc-finger</keyword>
<reference key="1">
    <citation type="journal article" date="2004" name="Nat. Genet.">
        <title>Complete sequencing and characterization of 21,243 full-length human cDNAs.</title>
        <authorList>
            <person name="Ota T."/>
            <person name="Suzuki Y."/>
            <person name="Nishikawa T."/>
            <person name="Otsuki T."/>
            <person name="Sugiyama T."/>
            <person name="Irie R."/>
            <person name="Wakamatsu A."/>
            <person name="Hayashi K."/>
            <person name="Sato H."/>
            <person name="Nagai K."/>
            <person name="Kimura K."/>
            <person name="Makita H."/>
            <person name="Sekine M."/>
            <person name="Obayashi M."/>
            <person name="Nishi T."/>
            <person name="Shibahara T."/>
            <person name="Tanaka T."/>
            <person name="Ishii S."/>
            <person name="Yamamoto J."/>
            <person name="Saito K."/>
            <person name="Kawai Y."/>
            <person name="Isono Y."/>
            <person name="Nakamura Y."/>
            <person name="Nagahari K."/>
            <person name="Murakami K."/>
            <person name="Yasuda T."/>
            <person name="Iwayanagi T."/>
            <person name="Wagatsuma M."/>
            <person name="Shiratori A."/>
            <person name="Sudo H."/>
            <person name="Hosoiri T."/>
            <person name="Kaku Y."/>
            <person name="Kodaira H."/>
            <person name="Kondo H."/>
            <person name="Sugawara M."/>
            <person name="Takahashi M."/>
            <person name="Kanda K."/>
            <person name="Yokoi T."/>
            <person name="Furuya T."/>
            <person name="Kikkawa E."/>
            <person name="Omura Y."/>
            <person name="Abe K."/>
            <person name="Kamihara K."/>
            <person name="Katsuta N."/>
            <person name="Sato K."/>
            <person name="Tanikawa M."/>
            <person name="Yamazaki M."/>
            <person name="Ninomiya K."/>
            <person name="Ishibashi T."/>
            <person name="Yamashita H."/>
            <person name="Murakawa K."/>
            <person name="Fujimori K."/>
            <person name="Tanai H."/>
            <person name="Kimata M."/>
            <person name="Watanabe M."/>
            <person name="Hiraoka S."/>
            <person name="Chiba Y."/>
            <person name="Ishida S."/>
            <person name="Ono Y."/>
            <person name="Takiguchi S."/>
            <person name="Watanabe S."/>
            <person name="Yosida M."/>
            <person name="Hotuta T."/>
            <person name="Kusano J."/>
            <person name="Kanehori K."/>
            <person name="Takahashi-Fujii A."/>
            <person name="Hara H."/>
            <person name="Tanase T.-O."/>
            <person name="Nomura Y."/>
            <person name="Togiya S."/>
            <person name="Komai F."/>
            <person name="Hara R."/>
            <person name="Takeuchi K."/>
            <person name="Arita M."/>
            <person name="Imose N."/>
            <person name="Musashino K."/>
            <person name="Yuuki H."/>
            <person name="Oshima A."/>
            <person name="Sasaki N."/>
            <person name="Aotsuka S."/>
            <person name="Yoshikawa Y."/>
            <person name="Matsunawa H."/>
            <person name="Ichihara T."/>
            <person name="Shiohata N."/>
            <person name="Sano S."/>
            <person name="Moriya S."/>
            <person name="Momiyama H."/>
            <person name="Satoh N."/>
            <person name="Takami S."/>
            <person name="Terashima Y."/>
            <person name="Suzuki O."/>
            <person name="Nakagawa S."/>
            <person name="Senoh A."/>
            <person name="Mizoguchi H."/>
            <person name="Goto Y."/>
            <person name="Shimizu F."/>
            <person name="Wakebe H."/>
            <person name="Hishigaki H."/>
            <person name="Watanabe T."/>
            <person name="Sugiyama A."/>
            <person name="Takemoto M."/>
            <person name="Kawakami B."/>
            <person name="Yamazaki M."/>
            <person name="Watanabe K."/>
            <person name="Kumagai A."/>
            <person name="Itakura S."/>
            <person name="Fukuzumi Y."/>
            <person name="Fujimori Y."/>
            <person name="Komiyama M."/>
            <person name="Tashiro H."/>
            <person name="Tanigami A."/>
            <person name="Fujiwara T."/>
            <person name="Ono T."/>
            <person name="Yamada K."/>
            <person name="Fujii Y."/>
            <person name="Ozaki K."/>
            <person name="Hirao M."/>
            <person name="Ohmori Y."/>
            <person name="Kawabata A."/>
            <person name="Hikiji T."/>
            <person name="Kobatake N."/>
            <person name="Inagaki H."/>
            <person name="Ikema Y."/>
            <person name="Okamoto S."/>
            <person name="Okitani R."/>
            <person name="Kawakami T."/>
            <person name="Noguchi S."/>
            <person name="Itoh T."/>
            <person name="Shigeta K."/>
            <person name="Senba T."/>
            <person name="Matsumura K."/>
            <person name="Nakajima Y."/>
            <person name="Mizuno T."/>
            <person name="Morinaga M."/>
            <person name="Sasaki M."/>
            <person name="Togashi T."/>
            <person name="Oyama M."/>
            <person name="Hata H."/>
            <person name="Watanabe M."/>
            <person name="Komatsu T."/>
            <person name="Mizushima-Sugano J."/>
            <person name="Satoh T."/>
            <person name="Shirai Y."/>
            <person name="Takahashi Y."/>
            <person name="Nakagawa K."/>
            <person name="Okumura K."/>
            <person name="Nagase T."/>
            <person name="Nomura N."/>
            <person name="Kikuchi H."/>
            <person name="Masuho Y."/>
            <person name="Yamashita R."/>
            <person name="Nakai K."/>
            <person name="Yada T."/>
            <person name="Nakamura Y."/>
            <person name="Ohara O."/>
            <person name="Isogai T."/>
            <person name="Sugano S."/>
        </authorList>
    </citation>
    <scope>NUCLEOTIDE SEQUENCE [LARGE SCALE MRNA] (ISOFORMS 1 AND 2)</scope>
    <scope>VARIANTS GLY-104 AND SER-199</scope>
    <source>
        <tissue>Testis</tissue>
    </source>
</reference>
<reference key="2">
    <citation type="journal article" date="2002" name="Am. J. Hum. Genet.">
        <title>Congenital dyserythropoietic anemia type I is caused by mutations in codanin-1.</title>
        <authorList>
            <person name="Dgany O."/>
            <person name="Avidan N."/>
            <person name="Delaunay J."/>
            <person name="Krasnov T."/>
            <person name="Shalmon L."/>
            <person name="Shalev H."/>
            <person name="Eidelitz-Markus T."/>
            <person name="Kapelushnik J."/>
            <person name="Cattan D."/>
            <person name="Pariente A."/>
            <person name="Tulliez M."/>
            <person name="Cretien A."/>
            <person name="Schischmanoff P.-O."/>
            <person name="Iolascon A."/>
            <person name="Fibach E."/>
            <person name="Koren A."/>
            <person name="Roessler J."/>
            <person name="Le Merrer M."/>
            <person name="Yaniv I."/>
            <person name="Zaizov R."/>
            <person name="Ben-Asher E."/>
            <person name="Olender T."/>
            <person name="Lancet D."/>
            <person name="Beckmann J.S."/>
            <person name="Tamary H."/>
        </authorList>
    </citation>
    <scope>NUCLEOTIDE SEQUENCE [MRNA] OF 2-852 (ISOFORM 1)</scope>
    <source>
        <tissue>Erythroid cell</tissue>
    </source>
</reference>
<reference key="3">
    <citation type="journal article" date="2004" name="Genome Res.">
        <title>The status, quality, and expansion of the NIH full-length cDNA project: the Mammalian Gene Collection (MGC).</title>
        <authorList>
            <consortium name="The MGC Project Team"/>
        </authorList>
    </citation>
    <scope>NUCLEOTIDE SEQUENCE [LARGE SCALE MRNA] OF 2-852 (ISOFORMS 3 AND 4)</scope>
</reference>
<reference key="4">
    <citation type="journal article" date="2008" name="Proc. Natl. Acad. Sci. U.S.A.">
        <title>A quantitative atlas of mitotic phosphorylation.</title>
        <authorList>
            <person name="Dephoure N."/>
            <person name="Zhou C."/>
            <person name="Villen J."/>
            <person name="Beausoleil S.A."/>
            <person name="Bakalarski C.E."/>
            <person name="Elledge S.J."/>
            <person name="Gygi S.P."/>
        </authorList>
    </citation>
    <scope>IDENTIFICATION BY MASS SPECTROMETRY [LARGE SCALE ANALYSIS]</scope>
    <source>
        <tissue>Cervix carcinoma</tissue>
    </source>
</reference>
<reference key="5">
    <citation type="journal article" date="2013" name="J. Proteome Res.">
        <title>Toward a comprehensive characterization of a human cancer cell phosphoproteome.</title>
        <authorList>
            <person name="Zhou H."/>
            <person name="Di Palma S."/>
            <person name="Preisinger C."/>
            <person name="Peng M."/>
            <person name="Polat A.N."/>
            <person name="Heck A.J."/>
            <person name="Mohammed S."/>
        </authorList>
    </citation>
    <scope>PHOSPHORYLATION [LARGE SCALE ANALYSIS] AT SER-153 AND SER-561</scope>
    <scope>IDENTIFICATION BY MASS SPECTROMETRY [LARGE SCALE ANALYSIS]</scope>
    <source>
        <tissue>Cervix carcinoma</tissue>
        <tissue>Erythroleukemia</tissue>
    </source>
</reference>
<reference key="6">
    <citation type="journal article" date="2014" name="J. Proteomics">
        <title>An enzyme assisted RP-RPLC approach for in-depth analysis of human liver phosphoproteome.</title>
        <authorList>
            <person name="Bian Y."/>
            <person name="Song C."/>
            <person name="Cheng K."/>
            <person name="Dong M."/>
            <person name="Wang F."/>
            <person name="Huang J."/>
            <person name="Sun D."/>
            <person name="Wang L."/>
            <person name="Ye M."/>
            <person name="Zou H."/>
        </authorList>
    </citation>
    <scope>PHOSPHORYLATION [LARGE SCALE ANALYSIS] AT SER-153</scope>
    <scope>IDENTIFICATION BY MASS SPECTROMETRY [LARGE SCALE ANALYSIS]</scope>
    <source>
        <tissue>Liver</tissue>
    </source>
</reference>
<reference key="7">
    <citation type="journal article" date="2017" name="Nat. Struct. Mol. Biol.">
        <title>Site-specific mapping of the human SUMO proteome reveals co-modification with phosphorylation.</title>
        <authorList>
            <person name="Hendriks I.A."/>
            <person name="Lyon D."/>
            <person name="Young C."/>
            <person name="Jensen L.J."/>
            <person name="Vertegaal A.C."/>
            <person name="Nielsen M.L."/>
        </authorList>
    </citation>
    <scope>SUMOYLATION [LARGE SCALE ANALYSIS] AT LYS-112; LYS-180; LYS-576 AND LYS-652</scope>
    <scope>IDENTIFICATION BY MASS SPECTROMETRY [LARGE SCALE ANALYSIS]</scope>
</reference>
<gene>
    <name type="primary">ZSCAN29</name>
    <name type="synonym">ZNF690</name>
</gene>
<accession>Q8IWY8</accession>
<accession>B3KVB9</accession>
<accession>Q32M75</accession>
<accession>Q32M76</accession>
<accession>Q8NA40</accession>
<proteinExistence type="evidence at protein level"/>
<name>ZSC29_HUMAN</name>
<evidence type="ECO:0000255" key="1">
    <source>
        <dbReference type="PROSITE-ProRule" id="PRU00042"/>
    </source>
</evidence>
<evidence type="ECO:0000255" key="2">
    <source>
        <dbReference type="PROSITE-ProRule" id="PRU00187"/>
    </source>
</evidence>
<evidence type="ECO:0000256" key="3">
    <source>
        <dbReference type="SAM" id="MobiDB-lite"/>
    </source>
</evidence>
<evidence type="ECO:0000269" key="4">
    <source>
    </source>
</evidence>
<evidence type="ECO:0000303" key="5">
    <source>
    </source>
</evidence>
<evidence type="ECO:0000303" key="6">
    <source>
    </source>
</evidence>
<evidence type="ECO:0000305" key="7"/>
<evidence type="ECO:0007744" key="8">
    <source>
    </source>
</evidence>
<evidence type="ECO:0007744" key="9">
    <source>
    </source>
</evidence>
<evidence type="ECO:0007744" key="10">
    <source>
    </source>
</evidence>